<feature type="chain" id="PRO_1000092539" description="Transcription antitermination protein NusB">
    <location>
        <begin position="1"/>
        <end position="211"/>
    </location>
</feature>
<feature type="region of interest" description="Disordered" evidence="2">
    <location>
        <begin position="152"/>
        <end position="211"/>
    </location>
</feature>
<feature type="compositionally biased region" description="Polar residues" evidence="2">
    <location>
        <begin position="175"/>
        <end position="188"/>
    </location>
</feature>
<name>NUSB_CHLT3</name>
<accession>B3QV72</accession>
<proteinExistence type="inferred from homology"/>
<gene>
    <name evidence="1" type="primary">nusB</name>
    <name type="ordered locus">Ctha_0555</name>
</gene>
<sequence>MIISRRQIRELAMQVLYAYEVRKEKVDKVAKGIIPEDVVADIKAKDFIFKIINSVIQNIQDIDTHIAKHADNWELNRMAIIDKNLMRIAIAEMLYLDDVPPKVSINEAIEIAKRYSTDKSSKFVNGILDATYNEVKSKGVLHKSGRGLVDLPAKKERVANPFPSTPPKKPENVPNPFSTPFKKNSSEPIRNPFEGNKSPQPPQKTLRRKKK</sequence>
<organism>
    <name type="scientific">Chloroherpeton thalassium (strain ATCC 35110 / GB-78)</name>
    <dbReference type="NCBI Taxonomy" id="517418"/>
    <lineage>
        <taxon>Bacteria</taxon>
        <taxon>Pseudomonadati</taxon>
        <taxon>Chlorobiota</taxon>
        <taxon>Chlorobiia</taxon>
        <taxon>Chlorobiales</taxon>
        <taxon>Chloroherpetonaceae</taxon>
        <taxon>Chloroherpeton</taxon>
    </lineage>
</organism>
<keyword id="KW-1185">Reference proteome</keyword>
<keyword id="KW-0694">RNA-binding</keyword>
<keyword id="KW-0804">Transcription</keyword>
<keyword id="KW-0889">Transcription antitermination</keyword>
<keyword id="KW-0805">Transcription regulation</keyword>
<protein>
    <recommendedName>
        <fullName evidence="1">Transcription antitermination protein NusB</fullName>
    </recommendedName>
    <alternativeName>
        <fullName evidence="1">Antitermination factor NusB</fullName>
    </alternativeName>
</protein>
<evidence type="ECO:0000255" key="1">
    <source>
        <dbReference type="HAMAP-Rule" id="MF_00073"/>
    </source>
</evidence>
<evidence type="ECO:0000256" key="2">
    <source>
        <dbReference type="SAM" id="MobiDB-lite"/>
    </source>
</evidence>
<dbReference type="EMBL" id="CP001100">
    <property type="protein sequence ID" value="ACF13026.1"/>
    <property type="molecule type" value="Genomic_DNA"/>
</dbReference>
<dbReference type="RefSeq" id="WP_012499110.1">
    <property type="nucleotide sequence ID" value="NC_011026.1"/>
</dbReference>
<dbReference type="SMR" id="B3QV72"/>
<dbReference type="STRING" id="517418.Ctha_0555"/>
<dbReference type="KEGG" id="cts:Ctha_0555"/>
<dbReference type="eggNOG" id="COG0781">
    <property type="taxonomic scope" value="Bacteria"/>
</dbReference>
<dbReference type="HOGENOM" id="CLU_087843_3_0_10"/>
<dbReference type="OrthoDB" id="9787568at2"/>
<dbReference type="Proteomes" id="UP000001208">
    <property type="component" value="Chromosome"/>
</dbReference>
<dbReference type="GO" id="GO:0005829">
    <property type="term" value="C:cytosol"/>
    <property type="evidence" value="ECO:0007669"/>
    <property type="project" value="TreeGrafter"/>
</dbReference>
<dbReference type="GO" id="GO:0003723">
    <property type="term" value="F:RNA binding"/>
    <property type="evidence" value="ECO:0007669"/>
    <property type="project" value="UniProtKB-UniRule"/>
</dbReference>
<dbReference type="GO" id="GO:0006353">
    <property type="term" value="P:DNA-templated transcription termination"/>
    <property type="evidence" value="ECO:0007669"/>
    <property type="project" value="UniProtKB-UniRule"/>
</dbReference>
<dbReference type="GO" id="GO:0031564">
    <property type="term" value="P:transcription antitermination"/>
    <property type="evidence" value="ECO:0007669"/>
    <property type="project" value="UniProtKB-KW"/>
</dbReference>
<dbReference type="CDD" id="cd00619">
    <property type="entry name" value="Terminator_NusB"/>
    <property type="match status" value="1"/>
</dbReference>
<dbReference type="Gene3D" id="1.10.940.10">
    <property type="entry name" value="NusB-like"/>
    <property type="match status" value="1"/>
</dbReference>
<dbReference type="HAMAP" id="MF_00073">
    <property type="entry name" value="NusB"/>
    <property type="match status" value="1"/>
</dbReference>
<dbReference type="InterPro" id="IPR035926">
    <property type="entry name" value="NusB-like_sf"/>
</dbReference>
<dbReference type="InterPro" id="IPR011605">
    <property type="entry name" value="NusB_fam"/>
</dbReference>
<dbReference type="InterPro" id="IPR006027">
    <property type="entry name" value="NusB_RsmB_TIM44"/>
</dbReference>
<dbReference type="NCBIfam" id="TIGR01951">
    <property type="entry name" value="nusB"/>
    <property type="match status" value="1"/>
</dbReference>
<dbReference type="PANTHER" id="PTHR11078:SF3">
    <property type="entry name" value="ANTITERMINATION NUSB DOMAIN-CONTAINING PROTEIN"/>
    <property type="match status" value="1"/>
</dbReference>
<dbReference type="PANTHER" id="PTHR11078">
    <property type="entry name" value="N UTILIZATION SUBSTANCE PROTEIN B-RELATED"/>
    <property type="match status" value="1"/>
</dbReference>
<dbReference type="Pfam" id="PF01029">
    <property type="entry name" value="NusB"/>
    <property type="match status" value="1"/>
</dbReference>
<dbReference type="SUPFAM" id="SSF48013">
    <property type="entry name" value="NusB-like"/>
    <property type="match status" value="1"/>
</dbReference>
<comment type="function">
    <text evidence="1">Involved in transcription antitermination. Required for transcription of ribosomal RNA (rRNA) genes. Binds specifically to the boxA antiterminator sequence of the ribosomal RNA (rrn) operons.</text>
</comment>
<comment type="similarity">
    <text evidence="1">Belongs to the NusB family.</text>
</comment>
<reference key="1">
    <citation type="submission" date="2008-06" db="EMBL/GenBank/DDBJ databases">
        <title>Complete sequence of Chloroherpeton thalassium ATCC 35110.</title>
        <authorList>
            <consortium name="US DOE Joint Genome Institute"/>
            <person name="Lucas S."/>
            <person name="Copeland A."/>
            <person name="Lapidus A."/>
            <person name="Glavina del Rio T."/>
            <person name="Dalin E."/>
            <person name="Tice H."/>
            <person name="Bruce D."/>
            <person name="Goodwin L."/>
            <person name="Pitluck S."/>
            <person name="Schmutz J."/>
            <person name="Larimer F."/>
            <person name="Land M."/>
            <person name="Hauser L."/>
            <person name="Kyrpides N."/>
            <person name="Mikhailova N."/>
            <person name="Liu Z."/>
            <person name="Li T."/>
            <person name="Zhao F."/>
            <person name="Overmann J."/>
            <person name="Bryant D.A."/>
            <person name="Richardson P."/>
        </authorList>
    </citation>
    <scope>NUCLEOTIDE SEQUENCE [LARGE SCALE GENOMIC DNA]</scope>
    <source>
        <strain>ATCC 35110 / GB-78</strain>
    </source>
</reference>